<organism>
    <name type="scientific">Picrophilus torridus (strain ATCC 700027 / DSM 9790 / JCM 10055 / NBRC 100828 / KAW 2/3)</name>
    <dbReference type="NCBI Taxonomy" id="1122961"/>
    <lineage>
        <taxon>Archaea</taxon>
        <taxon>Methanobacteriati</taxon>
        <taxon>Thermoplasmatota</taxon>
        <taxon>Thermoplasmata</taxon>
        <taxon>Thermoplasmatales</taxon>
        <taxon>Picrophilaceae</taxon>
        <taxon>Picrophilus</taxon>
    </lineage>
</organism>
<keyword id="KW-0687">Ribonucleoprotein</keyword>
<keyword id="KW-0689">Ribosomal protein</keyword>
<keyword id="KW-0694">RNA-binding</keyword>
<keyword id="KW-0699">rRNA-binding</keyword>
<sequence>MENIGIDVKKPERTCNDPKCPFHGNLRIHGQIIVGTVVSTKMNGSIVLKRESRRLIKKYERYETKISKFHAHLPGCIDVRPGDRVKIAECRKLAKTISFVVVEKVN</sequence>
<reference key="1">
    <citation type="journal article" date="2004" name="Proc. Natl. Acad. Sci. U.S.A.">
        <title>Genome sequence of Picrophilus torridus and its implications for life around pH 0.</title>
        <authorList>
            <person name="Fuetterer O."/>
            <person name="Angelov A."/>
            <person name="Liesegang H."/>
            <person name="Gottschalk G."/>
            <person name="Schleper C."/>
            <person name="Schepers B."/>
            <person name="Dock C."/>
            <person name="Antranikian G."/>
            <person name="Liebl W."/>
        </authorList>
    </citation>
    <scope>NUCLEOTIDE SEQUENCE [LARGE SCALE GENOMIC DNA]</scope>
    <source>
        <strain>ATCC 700027 / DSM 9790 / JCM 10055 / NBRC 100828 / KAW 2/3</strain>
    </source>
</reference>
<name>RS17_PICTO</name>
<gene>
    <name evidence="1" type="primary">rps17</name>
    <name type="ordered locus">PTO0649</name>
</gene>
<feature type="chain" id="PRO_0000232613" description="Small ribosomal subunit protein uS17">
    <location>
        <begin position="1"/>
        <end position="106"/>
    </location>
</feature>
<protein>
    <recommendedName>
        <fullName evidence="1">Small ribosomal subunit protein uS17</fullName>
    </recommendedName>
    <alternativeName>
        <fullName evidence="2">30S ribosomal protein S17</fullName>
    </alternativeName>
</protein>
<comment type="function">
    <text evidence="1">One of the primary rRNA binding proteins, it binds specifically to the 5'-end of 16S ribosomal RNA.</text>
</comment>
<comment type="subunit">
    <text evidence="1">Part of the 30S ribosomal subunit.</text>
</comment>
<comment type="similarity">
    <text evidence="1">Belongs to the universal ribosomal protein uS17 family.</text>
</comment>
<evidence type="ECO:0000255" key="1">
    <source>
        <dbReference type="HAMAP-Rule" id="MF_01345"/>
    </source>
</evidence>
<evidence type="ECO:0000305" key="2"/>
<accession>Q6L1B8</accession>
<dbReference type="EMBL" id="AE017261">
    <property type="protein sequence ID" value="AAT43234.1"/>
    <property type="molecule type" value="Genomic_DNA"/>
</dbReference>
<dbReference type="RefSeq" id="WP_011177450.1">
    <property type="nucleotide sequence ID" value="NC_005877.1"/>
</dbReference>
<dbReference type="SMR" id="Q6L1B8"/>
<dbReference type="FunCoup" id="Q6L1B8">
    <property type="interactions" value="164"/>
</dbReference>
<dbReference type="STRING" id="263820.PTO0649"/>
<dbReference type="PaxDb" id="263820-PTO0649"/>
<dbReference type="GeneID" id="2844421"/>
<dbReference type="KEGG" id="pto:PTO0649"/>
<dbReference type="eggNOG" id="arCOG04096">
    <property type="taxonomic scope" value="Archaea"/>
</dbReference>
<dbReference type="HOGENOM" id="CLU_073626_0_3_2"/>
<dbReference type="InParanoid" id="Q6L1B8"/>
<dbReference type="OrthoDB" id="10698at2157"/>
<dbReference type="Proteomes" id="UP000000438">
    <property type="component" value="Chromosome"/>
</dbReference>
<dbReference type="GO" id="GO:0022627">
    <property type="term" value="C:cytosolic small ribosomal subunit"/>
    <property type="evidence" value="ECO:0007669"/>
    <property type="project" value="TreeGrafter"/>
</dbReference>
<dbReference type="GO" id="GO:0019843">
    <property type="term" value="F:rRNA binding"/>
    <property type="evidence" value="ECO:0007669"/>
    <property type="project" value="UniProtKB-UniRule"/>
</dbReference>
<dbReference type="GO" id="GO:0003735">
    <property type="term" value="F:structural constituent of ribosome"/>
    <property type="evidence" value="ECO:0007669"/>
    <property type="project" value="InterPro"/>
</dbReference>
<dbReference type="GO" id="GO:0006412">
    <property type="term" value="P:translation"/>
    <property type="evidence" value="ECO:0007669"/>
    <property type="project" value="UniProtKB-UniRule"/>
</dbReference>
<dbReference type="CDD" id="cd00364">
    <property type="entry name" value="Ribosomal_uS17"/>
    <property type="match status" value="1"/>
</dbReference>
<dbReference type="Gene3D" id="2.40.50.1000">
    <property type="match status" value="1"/>
</dbReference>
<dbReference type="HAMAP" id="MF_01345_A">
    <property type="entry name" value="Ribosomal_uS17_A"/>
    <property type="match status" value="1"/>
</dbReference>
<dbReference type="InterPro" id="IPR012340">
    <property type="entry name" value="NA-bd_OB-fold"/>
</dbReference>
<dbReference type="InterPro" id="IPR000266">
    <property type="entry name" value="Ribosomal_uS17"/>
</dbReference>
<dbReference type="InterPro" id="IPR028333">
    <property type="entry name" value="Ribosomal_uS17_arc/euk"/>
</dbReference>
<dbReference type="InterPro" id="IPR019978">
    <property type="entry name" value="Ribosomal_uS17_archaeal"/>
</dbReference>
<dbReference type="NCBIfam" id="NF006345">
    <property type="entry name" value="PRK08572.1"/>
    <property type="match status" value="1"/>
</dbReference>
<dbReference type="NCBIfam" id="TIGR03630">
    <property type="entry name" value="uS17_arch"/>
    <property type="match status" value="1"/>
</dbReference>
<dbReference type="PANTHER" id="PTHR10744">
    <property type="entry name" value="40S RIBOSOMAL PROTEIN S11 FAMILY MEMBER"/>
    <property type="match status" value="1"/>
</dbReference>
<dbReference type="PANTHER" id="PTHR10744:SF9">
    <property type="entry name" value="40S RIBOSOMAL PROTEIN S11-RELATED"/>
    <property type="match status" value="1"/>
</dbReference>
<dbReference type="Pfam" id="PF00366">
    <property type="entry name" value="Ribosomal_S17"/>
    <property type="match status" value="1"/>
</dbReference>
<dbReference type="PRINTS" id="PR00973">
    <property type="entry name" value="RIBOSOMALS17"/>
</dbReference>
<dbReference type="SUPFAM" id="SSF50249">
    <property type="entry name" value="Nucleic acid-binding proteins"/>
    <property type="match status" value="1"/>
</dbReference>
<proteinExistence type="inferred from homology"/>